<feature type="signal peptide" evidence="1">
    <location>
        <begin position="1"/>
        <end position="21"/>
    </location>
</feature>
<feature type="chain" id="PRO_0000079341" description="Protein CreA">
    <location>
        <begin position="22"/>
        <end position="157"/>
    </location>
</feature>
<accession>P0AE92</accession>
<accession>P08367</accession>
<gene>
    <name type="primary">creA</name>
    <name type="ordered locus">c5484</name>
</gene>
<dbReference type="EMBL" id="AE014075">
    <property type="protein sequence ID" value="AAN83904.1"/>
    <property type="molecule type" value="Genomic_DNA"/>
</dbReference>
<dbReference type="RefSeq" id="WP_000875487.1">
    <property type="nucleotide sequence ID" value="NZ_CP051263.1"/>
</dbReference>
<dbReference type="STRING" id="199310.c5484"/>
<dbReference type="GeneID" id="93777448"/>
<dbReference type="KEGG" id="ecc:c5484"/>
<dbReference type="eggNOG" id="COG3045">
    <property type="taxonomic scope" value="Bacteria"/>
</dbReference>
<dbReference type="HOGENOM" id="CLU_109726_1_1_6"/>
<dbReference type="BioCyc" id="ECOL199310:C5484-MONOMER"/>
<dbReference type="Proteomes" id="UP000001410">
    <property type="component" value="Chromosome"/>
</dbReference>
<dbReference type="GO" id="GO:0005829">
    <property type="term" value="C:cytosol"/>
    <property type="evidence" value="ECO:0007669"/>
    <property type="project" value="TreeGrafter"/>
</dbReference>
<dbReference type="InterPro" id="IPR010292">
    <property type="entry name" value="Uncharacterised_CreA"/>
</dbReference>
<dbReference type="NCBIfam" id="NF008026">
    <property type="entry name" value="PRK10756.1"/>
    <property type="match status" value="1"/>
</dbReference>
<dbReference type="PANTHER" id="PTHR37952">
    <property type="match status" value="1"/>
</dbReference>
<dbReference type="PANTHER" id="PTHR37952:SF2">
    <property type="entry name" value="PROTEIN CREA"/>
    <property type="match status" value="1"/>
</dbReference>
<dbReference type="Pfam" id="PF05981">
    <property type="entry name" value="CreA"/>
    <property type="match status" value="1"/>
</dbReference>
<dbReference type="PIRSF" id="PIRSF003174">
    <property type="entry name" value="CreA"/>
    <property type="match status" value="1"/>
</dbReference>
<name>CREA_ECOL6</name>
<protein>
    <recommendedName>
        <fullName>Protein CreA</fullName>
    </recommendedName>
    <alternativeName>
        <fullName>Catabolite regulation protein A</fullName>
    </alternativeName>
</protein>
<reference key="1">
    <citation type="journal article" date="2002" name="Proc. Natl. Acad. Sci. U.S.A.">
        <title>Extensive mosaic structure revealed by the complete genome sequence of uropathogenic Escherichia coli.</title>
        <authorList>
            <person name="Welch R.A."/>
            <person name="Burland V."/>
            <person name="Plunkett G. III"/>
            <person name="Redford P."/>
            <person name="Roesch P."/>
            <person name="Rasko D."/>
            <person name="Buckles E.L."/>
            <person name="Liou S.-R."/>
            <person name="Boutin A."/>
            <person name="Hackett J."/>
            <person name="Stroud D."/>
            <person name="Mayhew G.F."/>
            <person name="Rose D.J."/>
            <person name="Zhou S."/>
            <person name="Schwartz D.C."/>
            <person name="Perna N.T."/>
            <person name="Mobley H.L.T."/>
            <person name="Donnenberg M.S."/>
            <person name="Blattner F.R."/>
        </authorList>
    </citation>
    <scope>NUCLEOTIDE SEQUENCE [LARGE SCALE GENOMIC DNA]</scope>
    <source>
        <strain>CFT073 / ATCC 700928 / UPEC</strain>
    </source>
</reference>
<sequence>MKYKHLILSLSLIMLGPLAHAEEIGSVDTVFKMIGPDHKIVVEAFDDPDVKNVTCYVSRAKTGGIKGGLGLAEDTSDAAISCQQVGPIELSDRIKNGKAQGEVVFKKRTSLVFKSLQVVRFYDAKRNALAYLAYSDKVVEGSPKNAISAVPVMPWRQ</sequence>
<organism>
    <name type="scientific">Escherichia coli O6:H1 (strain CFT073 / ATCC 700928 / UPEC)</name>
    <dbReference type="NCBI Taxonomy" id="199310"/>
    <lineage>
        <taxon>Bacteria</taxon>
        <taxon>Pseudomonadati</taxon>
        <taxon>Pseudomonadota</taxon>
        <taxon>Gammaproteobacteria</taxon>
        <taxon>Enterobacterales</taxon>
        <taxon>Enterobacteriaceae</taxon>
        <taxon>Escherichia</taxon>
    </lineage>
</organism>
<proteinExistence type="inferred from homology"/>
<keyword id="KW-1185">Reference proteome</keyword>
<keyword id="KW-0732">Signal</keyword>
<evidence type="ECO:0000255" key="1"/>